<comment type="function">
    <text evidence="1">Catalyzes the hydrolytic cleavage of the carbon-nitrogen bond in imidazolone-5-propanoate to yield N-formimidoyl-L-glutamate. It is the third step in the universal histidine degradation pathway.</text>
</comment>
<comment type="catalytic activity">
    <reaction evidence="1">
        <text>4-imidazolone-5-propanoate + H2O = N-formimidoyl-L-glutamate</text>
        <dbReference type="Rhea" id="RHEA:23660"/>
        <dbReference type="ChEBI" id="CHEBI:15377"/>
        <dbReference type="ChEBI" id="CHEBI:58928"/>
        <dbReference type="ChEBI" id="CHEBI:77893"/>
        <dbReference type="EC" id="3.5.2.7"/>
    </reaction>
</comment>
<comment type="cofactor">
    <cofactor evidence="1">
        <name>Zn(2+)</name>
        <dbReference type="ChEBI" id="CHEBI:29105"/>
    </cofactor>
    <cofactor evidence="1">
        <name>Fe(3+)</name>
        <dbReference type="ChEBI" id="CHEBI:29034"/>
    </cofactor>
    <text evidence="1">Binds 1 zinc or iron ion per subunit.</text>
</comment>
<comment type="pathway">
    <text evidence="1">Amino-acid degradation; L-histidine degradation into L-glutamate; N-formimidoyl-L-glutamate from L-histidine: step 3/3.</text>
</comment>
<comment type="subcellular location">
    <subcellularLocation>
        <location evidence="1">Cytoplasm</location>
    </subcellularLocation>
</comment>
<comment type="similarity">
    <text evidence="1">Belongs to the metallo-dependent hydrolases superfamily. HutI family.</text>
</comment>
<proteinExistence type="inferred from homology"/>
<keyword id="KW-0963">Cytoplasm</keyword>
<keyword id="KW-0369">Histidine metabolism</keyword>
<keyword id="KW-0378">Hydrolase</keyword>
<keyword id="KW-0408">Iron</keyword>
<keyword id="KW-0479">Metal-binding</keyword>
<keyword id="KW-0862">Zinc</keyword>
<accession>B5BC37</accession>
<dbReference type="EC" id="3.5.2.7" evidence="1"/>
<dbReference type="EMBL" id="FM200053">
    <property type="protein sequence ID" value="CAR60029.1"/>
    <property type="molecule type" value="Genomic_DNA"/>
</dbReference>
<dbReference type="RefSeq" id="WP_001249488.1">
    <property type="nucleotide sequence ID" value="NC_011147.1"/>
</dbReference>
<dbReference type="SMR" id="B5BC37"/>
<dbReference type="KEGG" id="sek:SSPA1832"/>
<dbReference type="HOGENOM" id="CLU_041647_0_0_6"/>
<dbReference type="UniPathway" id="UPA00379">
    <property type="reaction ID" value="UER00551"/>
</dbReference>
<dbReference type="Proteomes" id="UP000001869">
    <property type="component" value="Chromosome"/>
</dbReference>
<dbReference type="GO" id="GO:0005737">
    <property type="term" value="C:cytoplasm"/>
    <property type="evidence" value="ECO:0007669"/>
    <property type="project" value="UniProtKB-SubCell"/>
</dbReference>
<dbReference type="GO" id="GO:0050480">
    <property type="term" value="F:imidazolonepropionase activity"/>
    <property type="evidence" value="ECO:0007669"/>
    <property type="project" value="UniProtKB-UniRule"/>
</dbReference>
<dbReference type="GO" id="GO:0005506">
    <property type="term" value="F:iron ion binding"/>
    <property type="evidence" value="ECO:0007669"/>
    <property type="project" value="UniProtKB-UniRule"/>
</dbReference>
<dbReference type="GO" id="GO:0008270">
    <property type="term" value="F:zinc ion binding"/>
    <property type="evidence" value="ECO:0007669"/>
    <property type="project" value="UniProtKB-UniRule"/>
</dbReference>
<dbReference type="GO" id="GO:0019556">
    <property type="term" value="P:L-histidine catabolic process to glutamate and formamide"/>
    <property type="evidence" value="ECO:0007669"/>
    <property type="project" value="UniProtKB-UniPathway"/>
</dbReference>
<dbReference type="GO" id="GO:0019557">
    <property type="term" value="P:L-histidine catabolic process to glutamate and formate"/>
    <property type="evidence" value="ECO:0007669"/>
    <property type="project" value="UniProtKB-UniPathway"/>
</dbReference>
<dbReference type="CDD" id="cd01296">
    <property type="entry name" value="Imidazolone-5PH"/>
    <property type="match status" value="1"/>
</dbReference>
<dbReference type="FunFam" id="3.20.20.140:FF:000007">
    <property type="entry name" value="Imidazolonepropionase"/>
    <property type="match status" value="1"/>
</dbReference>
<dbReference type="Gene3D" id="3.20.20.140">
    <property type="entry name" value="Metal-dependent hydrolases"/>
    <property type="match status" value="1"/>
</dbReference>
<dbReference type="Gene3D" id="2.30.40.10">
    <property type="entry name" value="Urease, subunit C, domain 1"/>
    <property type="match status" value="1"/>
</dbReference>
<dbReference type="HAMAP" id="MF_00372">
    <property type="entry name" value="HutI"/>
    <property type="match status" value="1"/>
</dbReference>
<dbReference type="InterPro" id="IPR006680">
    <property type="entry name" value="Amidohydro-rel"/>
</dbReference>
<dbReference type="InterPro" id="IPR005920">
    <property type="entry name" value="HutI"/>
</dbReference>
<dbReference type="InterPro" id="IPR011059">
    <property type="entry name" value="Metal-dep_hydrolase_composite"/>
</dbReference>
<dbReference type="InterPro" id="IPR032466">
    <property type="entry name" value="Metal_Hydrolase"/>
</dbReference>
<dbReference type="NCBIfam" id="TIGR01224">
    <property type="entry name" value="hutI"/>
    <property type="match status" value="1"/>
</dbReference>
<dbReference type="PANTHER" id="PTHR42752">
    <property type="entry name" value="IMIDAZOLONEPROPIONASE"/>
    <property type="match status" value="1"/>
</dbReference>
<dbReference type="PANTHER" id="PTHR42752:SF1">
    <property type="entry name" value="IMIDAZOLONEPROPIONASE-RELATED"/>
    <property type="match status" value="1"/>
</dbReference>
<dbReference type="Pfam" id="PF01979">
    <property type="entry name" value="Amidohydro_1"/>
    <property type="match status" value="1"/>
</dbReference>
<dbReference type="SUPFAM" id="SSF51338">
    <property type="entry name" value="Composite domain of metallo-dependent hydrolases"/>
    <property type="match status" value="1"/>
</dbReference>
<dbReference type="SUPFAM" id="SSF51556">
    <property type="entry name" value="Metallo-dependent hydrolases"/>
    <property type="match status" value="1"/>
</dbReference>
<gene>
    <name evidence="1" type="primary">hutI</name>
    <name type="ordered locus">SSPA1832</name>
</gene>
<organism>
    <name type="scientific">Salmonella paratyphi A (strain AKU_12601)</name>
    <dbReference type="NCBI Taxonomy" id="554290"/>
    <lineage>
        <taxon>Bacteria</taxon>
        <taxon>Pseudomonadati</taxon>
        <taxon>Pseudomonadota</taxon>
        <taxon>Gammaproteobacteria</taxon>
        <taxon>Enterobacterales</taxon>
        <taxon>Enterobacteriaceae</taxon>
        <taxon>Salmonella</taxon>
    </lineage>
</organism>
<evidence type="ECO:0000255" key="1">
    <source>
        <dbReference type="HAMAP-Rule" id="MF_00372"/>
    </source>
</evidence>
<sequence>MRQLLPGDTVWRNIRLATMDPQRQAPYGLVDNQALIVREGHICDIVPETQLPVSGDNIHDMQGRLVTPGLIDCHTHLVFAGNRAAEWEQRLNGASYQHISAQGGGINATVSATRACAEETLYQLARERMMRLASEGVTLLEIKSGYGLELATEEKLLRVAAKLAAENAIDISPTLLAAHATPAEYRDDPDGYITLVCETMIPQLWKKGLFDAVDLFCESVGFNVAQSERVLQTAKALGIPVKGHVEQLSLLGGAQLVSRYQGLSADHIEYLDEAGVAAMRDGGTVGVLLPGAFYFLRETQHPPVELLRRYQVPVAVASDFNPGTSPFCSLHLAMNMACVQFGLTPEEAWAGVTRHAARALGRQATHGQLRAGYRADFVVWDAEQPVEIVYEPGRNPLYQRVYRGKIS</sequence>
<reference key="1">
    <citation type="journal article" date="2009" name="BMC Genomics">
        <title>Pseudogene accumulation in the evolutionary histories of Salmonella enterica serovars Paratyphi A and Typhi.</title>
        <authorList>
            <person name="Holt K.E."/>
            <person name="Thomson N.R."/>
            <person name="Wain J."/>
            <person name="Langridge G.C."/>
            <person name="Hasan R."/>
            <person name="Bhutta Z.A."/>
            <person name="Quail M.A."/>
            <person name="Norbertczak H."/>
            <person name="Walker D."/>
            <person name="Simmonds M."/>
            <person name="White B."/>
            <person name="Bason N."/>
            <person name="Mungall K."/>
            <person name="Dougan G."/>
            <person name="Parkhill J."/>
        </authorList>
    </citation>
    <scope>NUCLEOTIDE SEQUENCE [LARGE SCALE GENOMIC DNA]</scope>
    <source>
        <strain>AKU_12601</strain>
    </source>
</reference>
<protein>
    <recommendedName>
        <fullName evidence="1">Imidazolonepropionase</fullName>
        <ecNumber evidence="1">3.5.2.7</ecNumber>
    </recommendedName>
    <alternativeName>
        <fullName evidence="1">Imidazolone-5-propionate hydrolase</fullName>
    </alternativeName>
</protein>
<feature type="chain" id="PRO_1000121554" description="Imidazolonepropionase">
    <location>
        <begin position="1"/>
        <end position="407"/>
    </location>
</feature>
<feature type="binding site" evidence="1">
    <location>
        <position position="74"/>
    </location>
    <ligand>
        <name>Fe(3+)</name>
        <dbReference type="ChEBI" id="CHEBI:29034"/>
    </ligand>
</feature>
<feature type="binding site" evidence="1">
    <location>
        <position position="74"/>
    </location>
    <ligand>
        <name>Zn(2+)</name>
        <dbReference type="ChEBI" id="CHEBI:29105"/>
    </ligand>
</feature>
<feature type="binding site" evidence="1">
    <location>
        <position position="76"/>
    </location>
    <ligand>
        <name>Fe(3+)</name>
        <dbReference type="ChEBI" id="CHEBI:29034"/>
    </ligand>
</feature>
<feature type="binding site" evidence="1">
    <location>
        <position position="76"/>
    </location>
    <ligand>
        <name>Zn(2+)</name>
        <dbReference type="ChEBI" id="CHEBI:29105"/>
    </ligand>
</feature>
<feature type="binding site" evidence="1">
    <location>
        <position position="83"/>
    </location>
    <ligand>
        <name>4-imidazolone-5-propanoate</name>
        <dbReference type="ChEBI" id="CHEBI:77893"/>
    </ligand>
</feature>
<feature type="binding site" evidence="1">
    <location>
        <position position="146"/>
    </location>
    <ligand>
        <name>4-imidazolone-5-propanoate</name>
        <dbReference type="ChEBI" id="CHEBI:77893"/>
    </ligand>
</feature>
<feature type="binding site" evidence="1">
    <location>
        <position position="146"/>
    </location>
    <ligand>
        <name>N-formimidoyl-L-glutamate</name>
        <dbReference type="ChEBI" id="CHEBI:58928"/>
    </ligand>
</feature>
<feature type="binding site" evidence="1">
    <location>
        <position position="179"/>
    </location>
    <ligand>
        <name>4-imidazolone-5-propanoate</name>
        <dbReference type="ChEBI" id="CHEBI:77893"/>
    </ligand>
</feature>
<feature type="binding site" evidence="1">
    <location>
        <position position="244"/>
    </location>
    <ligand>
        <name>Fe(3+)</name>
        <dbReference type="ChEBI" id="CHEBI:29034"/>
    </ligand>
</feature>
<feature type="binding site" evidence="1">
    <location>
        <position position="244"/>
    </location>
    <ligand>
        <name>Zn(2+)</name>
        <dbReference type="ChEBI" id="CHEBI:29105"/>
    </ligand>
</feature>
<feature type="binding site" evidence="1">
    <location>
        <position position="247"/>
    </location>
    <ligand>
        <name>4-imidazolone-5-propanoate</name>
        <dbReference type="ChEBI" id="CHEBI:77893"/>
    </ligand>
</feature>
<feature type="binding site" evidence="1">
    <location>
        <position position="319"/>
    </location>
    <ligand>
        <name>Fe(3+)</name>
        <dbReference type="ChEBI" id="CHEBI:29034"/>
    </ligand>
</feature>
<feature type="binding site" evidence="1">
    <location>
        <position position="319"/>
    </location>
    <ligand>
        <name>Zn(2+)</name>
        <dbReference type="ChEBI" id="CHEBI:29105"/>
    </ligand>
</feature>
<feature type="binding site" evidence="1">
    <location>
        <position position="321"/>
    </location>
    <ligand>
        <name>N-formimidoyl-L-glutamate</name>
        <dbReference type="ChEBI" id="CHEBI:58928"/>
    </ligand>
</feature>
<feature type="binding site" evidence="1">
    <location>
        <position position="323"/>
    </location>
    <ligand>
        <name>N-formimidoyl-L-glutamate</name>
        <dbReference type="ChEBI" id="CHEBI:58928"/>
    </ligand>
</feature>
<feature type="binding site" evidence="1">
    <location>
        <position position="324"/>
    </location>
    <ligand>
        <name>4-imidazolone-5-propanoate</name>
        <dbReference type="ChEBI" id="CHEBI:77893"/>
    </ligand>
</feature>
<name>HUTI_SALPK</name>